<dbReference type="EMBL" id="CP000239">
    <property type="protein sequence ID" value="ABC99652.1"/>
    <property type="molecule type" value="Genomic_DNA"/>
</dbReference>
<dbReference type="RefSeq" id="WP_011430330.1">
    <property type="nucleotide sequence ID" value="NC_007775.1"/>
</dbReference>
<dbReference type="SMR" id="Q2JUG5"/>
<dbReference type="STRING" id="321327.CYA_1485"/>
<dbReference type="KEGG" id="cya:CYA_1485"/>
<dbReference type="eggNOG" id="ENOG502Z7YX">
    <property type="taxonomic scope" value="Bacteria"/>
</dbReference>
<dbReference type="HOGENOM" id="CLU_095465_0_0_3"/>
<dbReference type="OrthoDB" id="7059574at2"/>
<dbReference type="Proteomes" id="UP000008818">
    <property type="component" value="Chromosome"/>
</dbReference>
<dbReference type="GO" id="GO:0009522">
    <property type="term" value="C:photosystem I"/>
    <property type="evidence" value="ECO:0007669"/>
    <property type="project" value="InterPro"/>
</dbReference>
<dbReference type="GO" id="GO:0031676">
    <property type="term" value="C:plasma membrane-derived thylakoid membrane"/>
    <property type="evidence" value="ECO:0007669"/>
    <property type="project" value="UniProtKB-SubCell"/>
</dbReference>
<dbReference type="GO" id="GO:0015979">
    <property type="term" value="P:photosynthesis"/>
    <property type="evidence" value="ECO:0007669"/>
    <property type="project" value="UniProtKB-UniRule"/>
</dbReference>
<dbReference type="HAMAP" id="MF_00437">
    <property type="entry name" value="Ycf4"/>
    <property type="match status" value="1"/>
</dbReference>
<dbReference type="InterPro" id="IPR003359">
    <property type="entry name" value="PSI_Ycf4_assembly"/>
</dbReference>
<dbReference type="NCBIfam" id="NF002712">
    <property type="entry name" value="PRK02542.1"/>
    <property type="match status" value="1"/>
</dbReference>
<dbReference type="Pfam" id="PF02392">
    <property type="entry name" value="Ycf4"/>
    <property type="match status" value="1"/>
</dbReference>
<name>YCF4_SYNJA</name>
<organism>
    <name type="scientific">Synechococcus sp. (strain JA-3-3Ab)</name>
    <name type="common">Cyanobacteria bacterium Yellowstone A-Prime</name>
    <dbReference type="NCBI Taxonomy" id="321327"/>
    <lineage>
        <taxon>Bacteria</taxon>
        <taxon>Bacillati</taxon>
        <taxon>Cyanobacteriota</taxon>
        <taxon>Cyanophyceae</taxon>
        <taxon>Synechococcales</taxon>
        <taxon>Synechococcaceae</taxon>
        <taxon>Synechococcus</taxon>
    </lineage>
</organism>
<protein>
    <recommendedName>
        <fullName evidence="1">Photosystem I assembly protein Ycf4</fullName>
    </recommendedName>
</protein>
<comment type="function">
    <text evidence="1">Seems to be required for the assembly of the photosystem I complex.</text>
</comment>
<comment type="subcellular location">
    <subcellularLocation>
        <location evidence="1">Cellular thylakoid membrane</location>
        <topology evidence="1">Multi-pass membrane protein</topology>
    </subcellularLocation>
</comment>
<comment type="similarity">
    <text evidence="1">Belongs to the Ycf4 family.</text>
</comment>
<accession>Q2JUG5</accession>
<keyword id="KW-0472">Membrane</keyword>
<keyword id="KW-0602">Photosynthesis</keyword>
<keyword id="KW-0793">Thylakoid</keyword>
<keyword id="KW-0812">Transmembrane</keyword>
<keyword id="KW-1133">Transmembrane helix</keyword>
<feature type="chain" id="PRO_0000325987" description="Photosystem I assembly protein Ycf4">
    <location>
        <begin position="1"/>
        <end position="189"/>
    </location>
</feature>
<feature type="transmembrane region" description="Helical" evidence="1">
    <location>
        <begin position="25"/>
        <end position="45"/>
    </location>
</feature>
<feature type="transmembrane region" description="Helical" evidence="1">
    <location>
        <begin position="62"/>
        <end position="82"/>
    </location>
</feature>
<proteinExistence type="inferred from homology"/>
<reference key="1">
    <citation type="journal article" date="2007" name="ISME J.">
        <title>Population level functional diversity in a microbial community revealed by comparative genomic and metagenomic analyses.</title>
        <authorList>
            <person name="Bhaya D."/>
            <person name="Grossman A.R."/>
            <person name="Steunou A.-S."/>
            <person name="Khuri N."/>
            <person name="Cohan F.M."/>
            <person name="Hamamura N."/>
            <person name="Melendrez M.C."/>
            <person name="Bateson M.M."/>
            <person name="Ward D.M."/>
            <person name="Heidelberg J.F."/>
        </authorList>
    </citation>
    <scope>NUCLEOTIDE SEQUENCE [LARGE SCALE GENOMIC DNA]</scope>
    <source>
        <strain>JA-3-3Ab</strain>
    </source>
</reference>
<sequence>MSATVPEIRSENLLRYTVIGSRRPSVYFWAVALTGGGLGFTLAGLSSYFHRNLLPFSDPASLVFIPQGIAMLFYGVLGSLAGLYQWLSLYWNLGGGYNEFDRRTQKITLVRQGFPGKNREVRLEYDFAEVQSLRVELREGFNPRRAIYLRIKGRGDIPLTGVGQPPPLAEIENQAAEIARFLNVSLEGI</sequence>
<gene>
    <name evidence="1" type="primary">ycf4</name>
    <name type="ordered locus">CYA_1485</name>
</gene>
<evidence type="ECO:0000255" key="1">
    <source>
        <dbReference type="HAMAP-Rule" id="MF_00437"/>
    </source>
</evidence>